<accession>Q6K5P8</accession>
<accession>A0A0P0VJC0</accession>
<sequence length="223" mass="23452">MAAIRASFLLAAAALLALWCSDHGGVVASDPSHLQDLCVADKASTVRVNGVACKDGEDVAAEDFFFSGLHMAGNTTNKQGSAVTAVNVAQVPGLNTLGISLARIDYALHGLNPPHTHPRATEILTVLEGSLYVGFVTSNPENKLFTKVINKGDVFVFPKGLVHFQFNYGTTDAVAIVALSSQNPGVITVANAVFGSKPSITDDILAKAFQVEKTVVDQIQAKF</sequence>
<dbReference type="EMBL" id="AP004864">
    <property type="protein sequence ID" value="BAD21900.1"/>
    <property type="molecule type" value="Genomic_DNA"/>
</dbReference>
<dbReference type="EMBL" id="AP005317">
    <property type="protein sequence ID" value="BAD22077.1"/>
    <property type="molecule type" value="Genomic_DNA"/>
</dbReference>
<dbReference type="EMBL" id="AP008208">
    <property type="protein sequence ID" value="BAF08790.1"/>
    <property type="molecule type" value="Genomic_DNA"/>
</dbReference>
<dbReference type="EMBL" id="AP014958">
    <property type="protein sequence ID" value="BAS78744.1"/>
    <property type="molecule type" value="Genomic_DNA"/>
</dbReference>
<dbReference type="EMBL" id="CM000139">
    <property type="protein sequence ID" value="EAZ23100.1"/>
    <property type="molecule type" value="Genomic_DNA"/>
</dbReference>
<dbReference type="RefSeq" id="XP_015626751.1">
    <property type="nucleotide sequence ID" value="XM_015771265.1"/>
</dbReference>
<dbReference type="SMR" id="Q6K5P8"/>
<dbReference type="FunCoup" id="Q6K5P8">
    <property type="interactions" value="43"/>
</dbReference>
<dbReference type="STRING" id="39947.Q6K5P8"/>
<dbReference type="PaxDb" id="39947-Q6K5P8"/>
<dbReference type="EnsemblPlants" id="Os02t0491800-00">
    <property type="protein sequence ID" value="Os02t0491800-00"/>
    <property type="gene ID" value="Os02g0491800"/>
</dbReference>
<dbReference type="Gramene" id="Os02t0491800-00">
    <property type="protein sequence ID" value="Os02t0491800-00"/>
    <property type="gene ID" value="Os02g0491800"/>
</dbReference>
<dbReference type="KEGG" id="dosa:Os02g0491800"/>
<dbReference type="eggNOG" id="ENOG502QQ4A">
    <property type="taxonomic scope" value="Eukaryota"/>
</dbReference>
<dbReference type="HOGENOM" id="CLU_015790_0_0_1"/>
<dbReference type="InParanoid" id="Q6K5P8"/>
<dbReference type="OMA" id="SCFHAMA"/>
<dbReference type="OrthoDB" id="1921208at2759"/>
<dbReference type="Proteomes" id="UP000000763">
    <property type="component" value="Chromosome 2"/>
</dbReference>
<dbReference type="Proteomes" id="UP000007752">
    <property type="component" value="Chromosome 2"/>
</dbReference>
<dbReference type="Proteomes" id="UP000059680">
    <property type="component" value="Chromosome 2"/>
</dbReference>
<dbReference type="GO" id="GO:0048046">
    <property type="term" value="C:apoplast"/>
    <property type="evidence" value="ECO:0007669"/>
    <property type="project" value="UniProtKB-SubCell"/>
</dbReference>
<dbReference type="GO" id="GO:0030145">
    <property type="term" value="F:manganese ion binding"/>
    <property type="evidence" value="ECO:0007669"/>
    <property type="project" value="InterPro"/>
</dbReference>
<dbReference type="CDD" id="cd02241">
    <property type="entry name" value="cupin_OxOx"/>
    <property type="match status" value="1"/>
</dbReference>
<dbReference type="FunFam" id="2.60.120.10:FF:000005">
    <property type="entry name" value="Germin-like protein subfamily 1 member 8"/>
    <property type="match status" value="1"/>
</dbReference>
<dbReference type="Gene3D" id="2.60.120.10">
    <property type="entry name" value="Jelly Rolls"/>
    <property type="match status" value="1"/>
</dbReference>
<dbReference type="InterPro" id="IPR006045">
    <property type="entry name" value="Cupin_1"/>
</dbReference>
<dbReference type="InterPro" id="IPR001929">
    <property type="entry name" value="Germin"/>
</dbReference>
<dbReference type="InterPro" id="IPR019780">
    <property type="entry name" value="Germin_Mn-BS"/>
</dbReference>
<dbReference type="InterPro" id="IPR014710">
    <property type="entry name" value="RmlC-like_jellyroll"/>
</dbReference>
<dbReference type="InterPro" id="IPR011051">
    <property type="entry name" value="RmlC_Cupin_sf"/>
</dbReference>
<dbReference type="PANTHER" id="PTHR31238">
    <property type="entry name" value="GERMIN-LIKE PROTEIN SUBFAMILY 3 MEMBER 3"/>
    <property type="match status" value="1"/>
</dbReference>
<dbReference type="Pfam" id="PF00190">
    <property type="entry name" value="Cupin_1"/>
    <property type="match status" value="1"/>
</dbReference>
<dbReference type="PRINTS" id="PR00325">
    <property type="entry name" value="GERMIN"/>
</dbReference>
<dbReference type="SMART" id="SM00835">
    <property type="entry name" value="Cupin_1"/>
    <property type="match status" value="1"/>
</dbReference>
<dbReference type="SUPFAM" id="SSF51182">
    <property type="entry name" value="RmlC-like cupins"/>
    <property type="match status" value="1"/>
</dbReference>
<dbReference type="PROSITE" id="PS00725">
    <property type="entry name" value="GERMIN"/>
    <property type="match status" value="1"/>
</dbReference>
<keyword id="KW-0052">Apoplast</keyword>
<keyword id="KW-1015">Disulfide bond</keyword>
<keyword id="KW-0325">Glycoprotein</keyword>
<keyword id="KW-0464">Manganese</keyword>
<keyword id="KW-0479">Metal-binding</keyword>
<keyword id="KW-1185">Reference proteome</keyword>
<keyword id="KW-0964">Secreted</keyword>
<keyword id="KW-0732">Signal</keyword>
<comment type="function">
    <text>May play a role in plant defense. Probably has no oxalate oxidase activity even if the active site is conserved.</text>
</comment>
<comment type="subunit">
    <text evidence="1">Oligomer (believed to be a pentamer but probably hexamer).</text>
</comment>
<comment type="subcellular location">
    <subcellularLocation>
        <location evidence="1">Secreted</location>
        <location evidence="1">Extracellular space</location>
        <location evidence="1">Apoplast</location>
    </subcellularLocation>
</comment>
<comment type="similarity">
    <text evidence="3">Belongs to the germin family.</text>
</comment>
<name>GL23_ORYSJ</name>
<organism>
    <name type="scientific">Oryza sativa subsp. japonica</name>
    <name type="common">Rice</name>
    <dbReference type="NCBI Taxonomy" id="39947"/>
    <lineage>
        <taxon>Eukaryota</taxon>
        <taxon>Viridiplantae</taxon>
        <taxon>Streptophyta</taxon>
        <taxon>Embryophyta</taxon>
        <taxon>Tracheophyta</taxon>
        <taxon>Spermatophyta</taxon>
        <taxon>Magnoliopsida</taxon>
        <taxon>Liliopsida</taxon>
        <taxon>Poales</taxon>
        <taxon>Poaceae</taxon>
        <taxon>BOP clade</taxon>
        <taxon>Oryzoideae</taxon>
        <taxon>Oryzeae</taxon>
        <taxon>Oryzinae</taxon>
        <taxon>Oryza</taxon>
        <taxon>Oryza sativa</taxon>
    </lineage>
</organism>
<feature type="signal peptide" evidence="2">
    <location>
        <begin position="1"/>
        <end position="28"/>
    </location>
</feature>
<feature type="chain" id="PRO_0000365500" description="Putative germin-like protein 2-3">
    <location>
        <begin position="29"/>
        <end position="223"/>
    </location>
</feature>
<feature type="domain" description="Cupin type-1" evidence="2">
    <location>
        <begin position="67"/>
        <end position="217"/>
    </location>
</feature>
<feature type="binding site" evidence="1">
    <location>
        <position position="115"/>
    </location>
    <ligand>
        <name>Mn(2+)</name>
        <dbReference type="ChEBI" id="CHEBI:29035"/>
    </ligand>
</feature>
<feature type="binding site" evidence="1">
    <location>
        <position position="117"/>
    </location>
    <ligand>
        <name>Mn(2+)</name>
        <dbReference type="ChEBI" id="CHEBI:29035"/>
    </ligand>
</feature>
<feature type="binding site" evidence="1">
    <location>
        <position position="122"/>
    </location>
    <ligand>
        <name>Mn(2+)</name>
        <dbReference type="ChEBI" id="CHEBI:29035"/>
    </ligand>
</feature>
<feature type="binding site" evidence="1">
    <location>
        <position position="163"/>
    </location>
    <ligand>
        <name>Mn(2+)</name>
        <dbReference type="ChEBI" id="CHEBI:29035"/>
    </ligand>
</feature>
<feature type="glycosylation site" description="N-linked (GlcNAc...) asparagine" evidence="2">
    <location>
        <position position="74"/>
    </location>
</feature>
<feature type="disulfide bond" evidence="1">
    <location>
        <begin position="38"/>
        <end position="53"/>
    </location>
</feature>
<protein>
    <recommendedName>
        <fullName>Putative germin-like protein 2-3</fullName>
    </recommendedName>
</protein>
<evidence type="ECO:0000250" key="1"/>
<evidence type="ECO:0000255" key="2"/>
<evidence type="ECO:0000305" key="3"/>
<gene>
    <name type="ordered locus">Os02g0491800</name>
    <name type="ordered locus">LOC_Os02g29020</name>
    <name type="ORF">OsJ_006583</name>
    <name type="ORF">OSJNBa0048K16.37</name>
    <name type="ORF">P0579G08.13</name>
</gene>
<reference key="1">
    <citation type="journal article" date="2005" name="Nature">
        <title>The map-based sequence of the rice genome.</title>
        <authorList>
            <consortium name="International rice genome sequencing project (IRGSP)"/>
        </authorList>
    </citation>
    <scope>NUCLEOTIDE SEQUENCE [LARGE SCALE GENOMIC DNA]</scope>
    <source>
        <strain>cv. Nipponbare</strain>
    </source>
</reference>
<reference key="2">
    <citation type="journal article" date="2008" name="Nucleic Acids Res.">
        <title>The rice annotation project database (RAP-DB): 2008 update.</title>
        <authorList>
            <consortium name="The rice annotation project (RAP)"/>
        </authorList>
    </citation>
    <scope>GENOME REANNOTATION</scope>
    <source>
        <strain>cv. Nipponbare</strain>
    </source>
</reference>
<reference key="3">
    <citation type="journal article" date="2013" name="Rice">
        <title>Improvement of the Oryza sativa Nipponbare reference genome using next generation sequence and optical map data.</title>
        <authorList>
            <person name="Kawahara Y."/>
            <person name="de la Bastide M."/>
            <person name="Hamilton J.P."/>
            <person name="Kanamori H."/>
            <person name="McCombie W.R."/>
            <person name="Ouyang S."/>
            <person name="Schwartz D.C."/>
            <person name="Tanaka T."/>
            <person name="Wu J."/>
            <person name="Zhou S."/>
            <person name="Childs K.L."/>
            <person name="Davidson R.M."/>
            <person name="Lin H."/>
            <person name="Quesada-Ocampo L."/>
            <person name="Vaillancourt B."/>
            <person name="Sakai H."/>
            <person name="Lee S.S."/>
            <person name="Kim J."/>
            <person name="Numa H."/>
            <person name="Itoh T."/>
            <person name="Buell C.R."/>
            <person name="Matsumoto T."/>
        </authorList>
    </citation>
    <scope>GENOME REANNOTATION</scope>
    <source>
        <strain>cv. Nipponbare</strain>
    </source>
</reference>
<reference key="4">
    <citation type="journal article" date="2005" name="PLoS Biol.">
        <title>The genomes of Oryza sativa: a history of duplications.</title>
        <authorList>
            <person name="Yu J."/>
            <person name="Wang J."/>
            <person name="Lin W."/>
            <person name="Li S."/>
            <person name="Li H."/>
            <person name="Zhou J."/>
            <person name="Ni P."/>
            <person name="Dong W."/>
            <person name="Hu S."/>
            <person name="Zeng C."/>
            <person name="Zhang J."/>
            <person name="Zhang Y."/>
            <person name="Li R."/>
            <person name="Xu Z."/>
            <person name="Li S."/>
            <person name="Li X."/>
            <person name="Zheng H."/>
            <person name="Cong L."/>
            <person name="Lin L."/>
            <person name="Yin J."/>
            <person name="Geng J."/>
            <person name="Li G."/>
            <person name="Shi J."/>
            <person name="Liu J."/>
            <person name="Lv H."/>
            <person name="Li J."/>
            <person name="Wang J."/>
            <person name="Deng Y."/>
            <person name="Ran L."/>
            <person name="Shi X."/>
            <person name="Wang X."/>
            <person name="Wu Q."/>
            <person name="Li C."/>
            <person name="Ren X."/>
            <person name="Wang J."/>
            <person name="Wang X."/>
            <person name="Li D."/>
            <person name="Liu D."/>
            <person name="Zhang X."/>
            <person name="Ji Z."/>
            <person name="Zhao W."/>
            <person name="Sun Y."/>
            <person name="Zhang Z."/>
            <person name="Bao J."/>
            <person name="Han Y."/>
            <person name="Dong L."/>
            <person name="Ji J."/>
            <person name="Chen P."/>
            <person name="Wu S."/>
            <person name="Liu J."/>
            <person name="Xiao Y."/>
            <person name="Bu D."/>
            <person name="Tan J."/>
            <person name="Yang L."/>
            <person name="Ye C."/>
            <person name="Zhang J."/>
            <person name="Xu J."/>
            <person name="Zhou Y."/>
            <person name="Yu Y."/>
            <person name="Zhang B."/>
            <person name="Zhuang S."/>
            <person name="Wei H."/>
            <person name="Liu B."/>
            <person name="Lei M."/>
            <person name="Yu H."/>
            <person name="Li Y."/>
            <person name="Xu H."/>
            <person name="Wei S."/>
            <person name="He X."/>
            <person name="Fang L."/>
            <person name="Zhang Z."/>
            <person name="Zhang Y."/>
            <person name="Huang X."/>
            <person name="Su Z."/>
            <person name="Tong W."/>
            <person name="Li J."/>
            <person name="Tong Z."/>
            <person name="Li S."/>
            <person name="Ye J."/>
            <person name="Wang L."/>
            <person name="Fang L."/>
            <person name="Lei T."/>
            <person name="Chen C.-S."/>
            <person name="Chen H.-C."/>
            <person name="Xu Z."/>
            <person name="Li H."/>
            <person name="Huang H."/>
            <person name="Zhang F."/>
            <person name="Xu H."/>
            <person name="Li N."/>
            <person name="Zhao C."/>
            <person name="Li S."/>
            <person name="Dong L."/>
            <person name="Huang Y."/>
            <person name="Li L."/>
            <person name="Xi Y."/>
            <person name="Qi Q."/>
            <person name="Li W."/>
            <person name="Zhang B."/>
            <person name="Hu W."/>
            <person name="Zhang Y."/>
            <person name="Tian X."/>
            <person name="Jiao Y."/>
            <person name="Liang X."/>
            <person name="Jin J."/>
            <person name="Gao L."/>
            <person name="Zheng W."/>
            <person name="Hao B."/>
            <person name="Liu S.-M."/>
            <person name="Wang W."/>
            <person name="Yuan L."/>
            <person name="Cao M."/>
            <person name="McDermott J."/>
            <person name="Samudrala R."/>
            <person name="Wang J."/>
            <person name="Wong G.K.-S."/>
            <person name="Yang H."/>
        </authorList>
    </citation>
    <scope>NUCLEOTIDE SEQUENCE [LARGE SCALE GENOMIC DNA]</scope>
    <source>
        <strain>cv. Nipponbare</strain>
    </source>
</reference>
<proteinExistence type="inferred from homology"/>